<reference key="1">
    <citation type="journal article" date="2003" name="DNA Res.">
        <title>Complete genome structure of Gloeobacter violaceus PCC 7421, a cyanobacterium that lacks thylakoids.</title>
        <authorList>
            <person name="Nakamura Y."/>
            <person name="Kaneko T."/>
            <person name="Sato S."/>
            <person name="Mimuro M."/>
            <person name="Miyashita H."/>
            <person name="Tsuchiya T."/>
            <person name="Sasamoto S."/>
            <person name="Watanabe A."/>
            <person name="Kawashima K."/>
            <person name="Kishida Y."/>
            <person name="Kiyokawa C."/>
            <person name="Kohara M."/>
            <person name="Matsumoto M."/>
            <person name="Matsuno A."/>
            <person name="Nakazaki N."/>
            <person name="Shimpo S."/>
            <person name="Takeuchi C."/>
            <person name="Yamada M."/>
            <person name="Tabata S."/>
        </authorList>
    </citation>
    <scope>NUCLEOTIDE SEQUENCE [LARGE SCALE GENOMIC DNA]</scope>
    <source>
        <strain>ATCC 29082 / PCC 7421</strain>
    </source>
</reference>
<dbReference type="EC" id="1.10.3.9" evidence="1"/>
<dbReference type="EMBL" id="BA000045">
    <property type="protein sequence ID" value="BAC89647.1"/>
    <property type="molecule type" value="Genomic_DNA"/>
</dbReference>
<dbReference type="RefSeq" id="NP_924652.1">
    <property type="nucleotide sequence ID" value="NC_005125.1"/>
</dbReference>
<dbReference type="RefSeq" id="WP_011141705.1">
    <property type="nucleotide sequence ID" value="NC_005125.1"/>
</dbReference>
<dbReference type="SMR" id="Q7NJX5"/>
<dbReference type="STRING" id="251221.gene:10759197"/>
<dbReference type="EnsemblBacteria" id="BAC89647">
    <property type="protein sequence ID" value="BAC89647"/>
    <property type="gene ID" value="BAC89647"/>
</dbReference>
<dbReference type="KEGG" id="gvi:glr1706"/>
<dbReference type="PATRIC" id="fig|251221.4.peg.1737"/>
<dbReference type="eggNOG" id="ENOG502Z87P">
    <property type="taxonomic scope" value="Bacteria"/>
</dbReference>
<dbReference type="HOGENOM" id="CLU_054206_1_0_3"/>
<dbReference type="InParanoid" id="Q7NJX5"/>
<dbReference type="OrthoDB" id="505356at2"/>
<dbReference type="PhylomeDB" id="Q7NJX5"/>
<dbReference type="Proteomes" id="UP000000557">
    <property type="component" value="Chromosome"/>
</dbReference>
<dbReference type="GO" id="GO:0009523">
    <property type="term" value="C:photosystem II"/>
    <property type="evidence" value="ECO:0000318"/>
    <property type="project" value="GO_Central"/>
</dbReference>
<dbReference type="GO" id="GO:0005886">
    <property type="term" value="C:plasma membrane"/>
    <property type="evidence" value="ECO:0007669"/>
    <property type="project" value="UniProtKB-SubCell"/>
</dbReference>
<dbReference type="GO" id="GO:0016168">
    <property type="term" value="F:chlorophyll binding"/>
    <property type="evidence" value="ECO:0007669"/>
    <property type="project" value="UniProtKB-UniRule"/>
</dbReference>
<dbReference type="GO" id="GO:0045156">
    <property type="term" value="F:electron transporter, transferring electrons within the cyclic electron transport pathway of photosynthesis activity"/>
    <property type="evidence" value="ECO:0007669"/>
    <property type="project" value="InterPro"/>
</dbReference>
<dbReference type="GO" id="GO:0005506">
    <property type="term" value="F:iron ion binding"/>
    <property type="evidence" value="ECO:0007669"/>
    <property type="project" value="UniProtKB-UniRule"/>
</dbReference>
<dbReference type="GO" id="GO:0016682">
    <property type="term" value="F:oxidoreductase activity, acting on diphenols and related substances as donors, oxygen as acceptor"/>
    <property type="evidence" value="ECO:0007669"/>
    <property type="project" value="UniProtKB-UniRule"/>
</dbReference>
<dbReference type="GO" id="GO:0010242">
    <property type="term" value="F:oxygen evolving activity"/>
    <property type="evidence" value="ECO:0007669"/>
    <property type="project" value="UniProtKB-EC"/>
</dbReference>
<dbReference type="GO" id="GO:0009772">
    <property type="term" value="P:photosynthetic electron transport in photosystem II"/>
    <property type="evidence" value="ECO:0007669"/>
    <property type="project" value="InterPro"/>
</dbReference>
<dbReference type="GO" id="GO:0009635">
    <property type="term" value="P:response to herbicide"/>
    <property type="evidence" value="ECO:0007669"/>
    <property type="project" value="UniProtKB-KW"/>
</dbReference>
<dbReference type="FunFam" id="1.20.85.10:FF:000002">
    <property type="entry name" value="Photosystem II protein D1"/>
    <property type="match status" value="1"/>
</dbReference>
<dbReference type="Gene3D" id="1.20.85.10">
    <property type="entry name" value="Photosystem II protein D1-like"/>
    <property type="match status" value="1"/>
</dbReference>
<dbReference type="HAMAP" id="MF_01379">
    <property type="entry name" value="PSII_PsbA_D1"/>
    <property type="match status" value="1"/>
</dbReference>
<dbReference type="InterPro" id="IPR055266">
    <property type="entry name" value="D1/D2"/>
</dbReference>
<dbReference type="InterPro" id="IPR036854">
    <property type="entry name" value="Photo_II_D1/D2_sf"/>
</dbReference>
<dbReference type="InterPro" id="IPR000484">
    <property type="entry name" value="Photo_RC_L/M"/>
</dbReference>
<dbReference type="InterPro" id="IPR055265">
    <property type="entry name" value="Photo_RC_L/M_CS"/>
</dbReference>
<dbReference type="InterPro" id="IPR005867">
    <property type="entry name" value="PSII_D1"/>
</dbReference>
<dbReference type="NCBIfam" id="TIGR01151">
    <property type="entry name" value="psbA"/>
    <property type="match status" value="1"/>
</dbReference>
<dbReference type="PANTHER" id="PTHR33149:SF12">
    <property type="entry name" value="PHOTOSYSTEM II D2 PROTEIN"/>
    <property type="match status" value="1"/>
</dbReference>
<dbReference type="PANTHER" id="PTHR33149">
    <property type="entry name" value="PHOTOSYSTEM II PROTEIN D1"/>
    <property type="match status" value="1"/>
</dbReference>
<dbReference type="Pfam" id="PF00124">
    <property type="entry name" value="Photo_RC"/>
    <property type="match status" value="1"/>
</dbReference>
<dbReference type="SUPFAM" id="SSF81483">
    <property type="entry name" value="Bacterial photosystem II reaction centre, L and M subunits"/>
    <property type="match status" value="1"/>
</dbReference>
<dbReference type="PROSITE" id="PS00244">
    <property type="entry name" value="REACTION_CENTER"/>
    <property type="match status" value="1"/>
</dbReference>
<organism>
    <name type="scientific">Gloeobacter violaceus (strain ATCC 29082 / PCC 7421)</name>
    <dbReference type="NCBI Taxonomy" id="251221"/>
    <lineage>
        <taxon>Bacteria</taxon>
        <taxon>Bacillati</taxon>
        <taxon>Cyanobacteriota</taxon>
        <taxon>Cyanophyceae</taxon>
        <taxon>Gloeobacterales</taxon>
        <taxon>Gloeobacteraceae</taxon>
        <taxon>Gloeobacter</taxon>
    </lineage>
</organism>
<protein>
    <recommendedName>
        <fullName evidence="1">Photosystem II protein D1 2</fullName>
        <shortName evidence="1">PSII D1 protein 2</shortName>
        <ecNumber evidence="1">1.10.3.9</ecNumber>
    </recommendedName>
    <alternativeName>
        <fullName evidence="1">Photosystem II Q(B) protein 2</fullName>
    </alternativeName>
</protein>
<gene>
    <name evidence="1 2" type="primary">psbA2</name>
    <name type="ordered locus">glr1706</name>
</gene>
<comment type="function">
    <text evidence="1">Photosystem II (PSII) is a light-driven water:plastoquinone oxidoreductase that uses light energy to abstract electrons from H(2)O, generating O(2) and a proton gradient subsequently used for ATP formation. It consists of a core antenna complex that captures photons, and an electron transfer chain that converts photonic excitation into a charge separation. The D1/D2 (PsbA/PsbD) reaction center heterodimer binds P680, the primary electron donor of PSII as well as several subsequent electron acceptors.</text>
</comment>
<comment type="catalytic activity">
    <reaction evidence="1">
        <text>2 a plastoquinone + 4 hnu + 2 H2O = 2 a plastoquinol + O2</text>
        <dbReference type="Rhea" id="RHEA:36359"/>
        <dbReference type="Rhea" id="RHEA-COMP:9561"/>
        <dbReference type="Rhea" id="RHEA-COMP:9562"/>
        <dbReference type="ChEBI" id="CHEBI:15377"/>
        <dbReference type="ChEBI" id="CHEBI:15379"/>
        <dbReference type="ChEBI" id="CHEBI:17757"/>
        <dbReference type="ChEBI" id="CHEBI:30212"/>
        <dbReference type="ChEBI" id="CHEBI:62192"/>
        <dbReference type="EC" id="1.10.3.9"/>
    </reaction>
</comment>
<comment type="cofactor">
    <text evidence="1">The D1/D2 heterodimer binds P680, chlorophylls that are the primary electron donor of PSII, and subsequent electron acceptors. It shares a non-heme iron and each subunit binds pheophytin, quinone, additional chlorophylls, carotenoids and lipids. D1 provides most of the ligands for the Mn4-Ca-O5 cluster of the oxygen-evolving complex (OEC). There is also a Cl(-1) ion associated with D1 and D2, which is required for oxygen evolution. The PSII complex binds additional chlorophylls, carotenoids and specific lipids.</text>
</comment>
<comment type="subunit">
    <text evidence="3">PSII is composed of 1 copy each of membrane proteins PsbA, PsbB, PsbC, PsbD, PsbE, PsbF, PsbH, PsbI, PsbJ, PsbK, PsbL, PsbM, PsbT, PsbX, Psb30/Ycf12, peripheral proteins PsbO, CyanoQ (PsbQ), PsbU, PsbV and a large number of cofactors. It forms dimeric complexes.</text>
</comment>
<comment type="subcellular location">
    <subcellularLocation>
        <location evidence="1">Cell inner membrane</location>
        <topology evidence="1">Multi-pass membrane protein</topology>
    </subcellularLocation>
</comment>
<comment type="PTM">
    <text evidence="1">Tyr-161 forms a radical intermediate that is referred to as redox-active TyrZ, YZ or Y-Z.</text>
</comment>
<comment type="PTM">
    <text evidence="1">C-terminally processed by CtpA; processing is essential to allow assembly of the oxygen-evolving complex and thus photosynthetic growth.</text>
</comment>
<comment type="miscellaneous">
    <text evidence="1">Cyanobacteria usually contain more than 2 copies of the psbA gene.</text>
</comment>
<comment type="miscellaneous">
    <text evidence="1">2 of the reaction center chlorophylls (ChlD1 and ChlD2) are entirely coordinated by water.</text>
</comment>
<comment type="miscellaneous">
    <text evidence="1">Herbicides such as atrazine, BNT, diuron or ioxynil bind in the Q(B) binding site and block subsequent electron transfer.</text>
</comment>
<comment type="similarity">
    <text evidence="1">Belongs to the reaction center PufL/M/PsbA/D family.</text>
</comment>
<keyword id="KW-0106">Calcium</keyword>
<keyword id="KW-0997">Cell inner membrane</keyword>
<keyword id="KW-1003">Cell membrane</keyword>
<keyword id="KW-0148">Chlorophyll</keyword>
<keyword id="KW-0157">Chromophore</keyword>
<keyword id="KW-0249">Electron transport</keyword>
<keyword id="KW-0359">Herbicide resistance</keyword>
<keyword id="KW-0408">Iron</keyword>
<keyword id="KW-0460">Magnesium</keyword>
<keyword id="KW-0464">Manganese</keyword>
<keyword id="KW-0472">Membrane</keyword>
<keyword id="KW-0479">Metal-binding</keyword>
<keyword id="KW-0560">Oxidoreductase</keyword>
<keyword id="KW-0602">Photosynthesis</keyword>
<keyword id="KW-0604">Photosystem II</keyword>
<keyword id="KW-1185">Reference proteome</keyword>
<keyword id="KW-0812">Transmembrane</keyword>
<keyword id="KW-1133">Transmembrane helix</keyword>
<keyword id="KW-0813">Transport</keyword>
<feature type="chain" id="PRO_0000316347" description="Photosystem II protein D1 2">
    <location>
        <begin position="1"/>
        <end position="344"/>
    </location>
</feature>
<feature type="propeptide" id="PRO_0000316348" evidence="1">
    <location>
        <begin position="345"/>
        <end position="360"/>
    </location>
</feature>
<feature type="transmembrane region" description="Helical" evidence="1">
    <location>
        <begin position="29"/>
        <end position="46"/>
    </location>
</feature>
<feature type="transmembrane region" description="Helical" evidence="1">
    <location>
        <begin position="118"/>
        <end position="133"/>
    </location>
</feature>
<feature type="transmembrane region" description="Helical" evidence="1">
    <location>
        <begin position="142"/>
        <end position="156"/>
    </location>
</feature>
<feature type="transmembrane region" description="Helical" evidence="1">
    <location>
        <begin position="197"/>
        <end position="218"/>
    </location>
</feature>
<feature type="transmembrane region" description="Helical" evidence="1">
    <location>
        <begin position="274"/>
        <end position="288"/>
    </location>
</feature>
<feature type="binding site" description="axial binding residue" evidence="1">
    <location>
        <position position="118"/>
    </location>
    <ligand>
        <name>chlorophyll a</name>
        <dbReference type="ChEBI" id="CHEBI:58416"/>
        <label>ChlzD1</label>
    </ligand>
    <ligandPart>
        <name>Mg</name>
        <dbReference type="ChEBI" id="CHEBI:25107"/>
    </ligandPart>
</feature>
<feature type="binding site" evidence="1">
    <location>
        <position position="126"/>
    </location>
    <ligand>
        <name>pheophytin a</name>
        <dbReference type="ChEBI" id="CHEBI:136840"/>
        <label>D1</label>
    </ligand>
</feature>
<feature type="binding site" evidence="1">
    <location>
        <position position="170"/>
    </location>
    <ligand>
        <name>[CaMn4O5] cluster</name>
        <dbReference type="ChEBI" id="CHEBI:189552"/>
    </ligand>
</feature>
<feature type="binding site" evidence="1">
    <location>
        <position position="189"/>
    </location>
    <ligand>
        <name>[CaMn4O5] cluster</name>
        <dbReference type="ChEBI" id="CHEBI:189552"/>
    </ligand>
</feature>
<feature type="binding site" description="axial binding residue" evidence="1">
    <location>
        <position position="198"/>
    </location>
    <ligand>
        <name>chlorophyll a</name>
        <dbReference type="ChEBI" id="CHEBI:58416"/>
        <label>PD1</label>
    </ligand>
    <ligandPart>
        <name>Mg</name>
        <dbReference type="ChEBI" id="CHEBI:25107"/>
    </ligandPart>
</feature>
<feature type="binding site" evidence="1">
    <location>
        <position position="215"/>
    </location>
    <ligand>
        <name>a quinone</name>
        <dbReference type="ChEBI" id="CHEBI:132124"/>
        <label>B</label>
    </ligand>
</feature>
<feature type="binding site" evidence="1">
    <location>
        <position position="215"/>
    </location>
    <ligand>
        <name>Fe cation</name>
        <dbReference type="ChEBI" id="CHEBI:24875"/>
        <note>ligand shared with heterodimeric partner</note>
    </ligand>
</feature>
<feature type="binding site" evidence="1">
    <location>
        <begin position="264"/>
        <end position="265"/>
    </location>
    <ligand>
        <name>a quinone</name>
        <dbReference type="ChEBI" id="CHEBI:132124"/>
        <label>B</label>
    </ligand>
</feature>
<feature type="binding site" evidence="1">
    <location>
        <position position="272"/>
    </location>
    <ligand>
        <name>Fe cation</name>
        <dbReference type="ChEBI" id="CHEBI:24875"/>
        <note>ligand shared with heterodimeric partner</note>
    </ligand>
</feature>
<feature type="binding site" evidence="1">
    <location>
        <position position="332"/>
    </location>
    <ligand>
        <name>[CaMn4O5] cluster</name>
        <dbReference type="ChEBI" id="CHEBI:189552"/>
    </ligand>
</feature>
<feature type="binding site" evidence="1">
    <location>
        <position position="333"/>
    </location>
    <ligand>
        <name>[CaMn4O5] cluster</name>
        <dbReference type="ChEBI" id="CHEBI:189552"/>
    </ligand>
</feature>
<feature type="binding site" evidence="1">
    <location>
        <position position="342"/>
    </location>
    <ligand>
        <name>[CaMn4O5] cluster</name>
        <dbReference type="ChEBI" id="CHEBI:189552"/>
    </ligand>
</feature>
<feature type="binding site" evidence="1">
    <location>
        <position position="344"/>
    </location>
    <ligand>
        <name>[CaMn4O5] cluster</name>
        <dbReference type="ChEBI" id="CHEBI:189552"/>
    </ligand>
</feature>
<feature type="site" description="Tyrosine radical intermediate" evidence="1">
    <location>
        <position position="161"/>
    </location>
</feature>
<feature type="site" description="Stabilizes free radical intermediate" evidence="1">
    <location>
        <position position="190"/>
    </location>
</feature>
<feature type="site" description="Cleavage; by CtpA" evidence="1">
    <location>
        <begin position="344"/>
        <end position="345"/>
    </location>
</feature>
<name>PSBA2_GLOVI</name>
<accession>Q7NJX5</accession>
<proteinExistence type="inferred from homology"/>
<sequence length="360" mass="39720">MATILRRRSLGNPWEQFANWITSTDNRFYIGWFGVLMVPTLLSATICFVVAFIAAPPVDMDGIREPISGSLLYGNNIITGAVIPSSNAIGLHFYPIWEAASMDEWLYNGGPYQLVVFHFLIGIFAYLGREWEFSYRLGLRPWICVAYSAPVAAATAVFLIYPMGQGSFSDGMSLGISGTFNFMFIFQAEHNILNHPLHMFGVAGVFGGSLFAAMHGSLVTSSLIKATSYEESQNYGYKFGQEEETYNIVAAHGYFGRLIFQYASFTNSRSLHFFLAAWPVIGIWLTSLGICVMGFNLNGFNFNASITDNQGRTIYTWADIVNRANLGIEVMHERNAHNFPLDLAGTESAPVAFAAALGDG</sequence>
<evidence type="ECO:0000255" key="1">
    <source>
        <dbReference type="HAMAP-Rule" id="MF_01379"/>
    </source>
</evidence>
<evidence type="ECO:0000305" key="2"/>
<evidence type="ECO:0000305" key="3">
    <source>
    </source>
</evidence>